<comment type="cofactor">
    <cofactor evidence="1">
        <name>Zn(2+)</name>
        <dbReference type="ChEBI" id="CHEBI:29105"/>
    </cofactor>
    <text evidence="1">Binds 1 zinc ion.</text>
</comment>
<comment type="subcellular location">
    <subcellularLocation>
        <location evidence="1">Cytoplasm</location>
    </subcellularLocation>
</comment>
<comment type="similarity">
    <text evidence="1">Belongs to the SprT family.</text>
</comment>
<organism>
    <name type="scientific">Staphylococcus aureus (strain N315)</name>
    <dbReference type="NCBI Taxonomy" id="158879"/>
    <lineage>
        <taxon>Bacteria</taxon>
        <taxon>Bacillati</taxon>
        <taxon>Bacillota</taxon>
        <taxon>Bacilli</taxon>
        <taxon>Bacillales</taxon>
        <taxon>Staphylococcaceae</taxon>
        <taxon>Staphylococcus</taxon>
    </lineage>
</organism>
<feature type="chain" id="PRO_0000213298" description="Protein SprT-like">
    <location>
        <begin position="1"/>
        <end position="151"/>
    </location>
</feature>
<feature type="domain" description="SprT-like" evidence="1">
    <location>
        <begin position="6"/>
        <end position="147"/>
    </location>
</feature>
<feature type="active site" evidence="1">
    <location>
        <position position="68"/>
    </location>
</feature>
<feature type="binding site" evidence="1">
    <location>
        <position position="67"/>
    </location>
    <ligand>
        <name>Zn(2+)</name>
        <dbReference type="ChEBI" id="CHEBI:29105"/>
    </ligand>
</feature>
<feature type="binding site" evidence="1">
    <location>
        <position position="71"/>
    </location>
    <ligand>
        <name>Zn(2+)</name>
        <dbReference type="ChEBI" id="CHEBI:29105"/>
    </ligand>
</feature>
<keyword id="KW-0963">Cytoplasm</keyword>
<keyword id="KW-0479">Metal-binding</keyword>
<keyword id="KW-0862">Zinc</keyword>
<dbReference type="EMBL" id="BA000018">
    <property type="protein sequence ID" value="BAB43149.1"/>
    <property type="molecule type" value="Genomic_DNA"/>
</dbReference>
<dbReference type="PIR" id="D89998">
    <property type="entry name" value="D89998"/>
</dbReference>
<dbReference type="RefSeq" id="WP_001058111.1">
    <property type="nucleotide sequence ID" value="NC_002745.2"/>
</dbReference>
<dbReference type="EnsemblBacteria" id="BAB43149">
    <property type="protein sequence ID" value="BAB43149"/>
    <property type="gene ID" value="BAB43149"/>
</dbReference>
<dbReference type="KEGG" id="sau:SA1867"/>
<dbReference type="HOGENOM" id="CLU_123820_0_0_9"/>
<dbReference type="GO" id="GO:0005737">
    <property type="term" value="C:cytoplasm"/>
    <property type="evidence" value="ECO:0007669"/>
    <property type="project" value="UniProtKB-SubCell"/>
</dbReference>
<dbReference type="GO" id="GO:0008270">
    <property type="term" value="F:zinc ion binding"/>
    <property type="evidence" value="ECO:0007669"/>
    <property type="project" value="UniProtKB-UniRule"/>
</dbReference>
<dbReference type="GO" id="GO:0006950">
    <property type="term" value="P:response to stress"/>
    <property type="evidence" value="ECO:0007669"/>
    <property type="project" value="UniProtKB-ARBA"/>
</dbReference>
<dbReference type="HAMAP" id="MF_00745">
    <property type="entry name" value="SprT_like"/>
    <property type="match status" value="1"/>
</dbReference>
<dbReference type="InterPro" id="IPR006640">
    <property type="entry name" value="SprT-like_domain"/>
</dbReference>
<dbReference type="InterPro" id="IPR035240">
    <property type="entry name" value="SprT_Zn_ribbon"/>
</dbReference>
<dbReference type="InterPro" id="IPR023524">
    <property type="entry name" value="Uncharacterised_SprT-like"/>
</dbReference>
<dbReference type="NCBIfam" id="NF003339">
    <property type="entry name" value="PRK04351.1"/>
    <property type="match status" value="1"/>
</dbReference>
<dbReference type="Pfam" id="PF10263">
    <property type="entry name" value="SprT-like"/>
    <property type="match status" value="1"/>
</dbReference>
<dbReference type="Pfam" id="PF17283">
    <property type="entry name" value="Zn_ribbon_SprT"/>
    <property type="match status" value="1"/>
</dbReference>
<dbReference type="SMART" id="SM00731">
    <property type="entry name" value="SprT"/>
    <property type="match status" value="1"/>
</dbReference>
<evidence type="ECO:0000255" key="1">
    <source>
        <dbReference type="HAMAP-Rule" id="MF_00745"/>
    </source>
</evidence>
<protein>
    <recommendedName>
        <fullName evidence="1">Protein SprT-like</fullName>
    </recommendedName>
</protein>
<proteinExistence type="inferred from homology"/>
<accession>P67727</accession>
<accession>Q99SJ0</accession>
<name>SPRTL_STAAN</name>
<reference key="1">
    <citation type="journal article" date="2001" name="Lancet">
        <title>Whole genome sequencing of meticillin-resistant Staphylococcus aureus.</title>
        <authorList>
            <person name="Kuroda M."/>
            <person name="Ohta T."/>
            <person name="Uchiyama I."/>
            <person name="Baba T."/>
            <person name="Yuzawa H."/>
            <person name="Kobayashi I."/>
            <person name="Cui L."/>
            <person name="Oguchi A."/>
            <person name="Aoki K."/>
            <person name="Nagai Y."/>
            <person name="Lian J.-Q."/>
            <person name="Ito T."/>
            <person name="Kanamori M."/>
            <person name="Matsumaru H."/>
            <person name="Maruyama A."/>
            <person name="Murakami H."/>
            <person name="Hosoyama A."/>
            <person name="Mizutani-Ui Y."/>
            <person name="Takahashi N.K."/>
            <person name="Sawano T."/>
            <person name="Inoue R."/>
            <person name="Kaito C."/>
            <person name="Sekimizu K."/>
            <person name="Hirakawa H."/>
            <person name="Kuhara S."/>
            <person name="Goto S."/>
            <person name="Yabuzaki J."/>
            <person name="Kanehisa M."/>
            <person name="Yamashita A."/>
            <person name="Oshima K."/>
            <person name="Furuya K."/>
            <person name="Yoshino C."/>
            <person name="Shiba T."/>
            <person name="Hattori M."/>
            <person name="Ogasawara N."/>
            <person name="Hayashi H."/>
            <person name="Hiramatsu K."/>
        </authorList>
    </citation>
    <scope>NUCLEOTIDE SEQUENCE [LARGE SCALE GENOMIC DNA]</scope>
    <source>
        <strain>N315</strain>
    </source>
</reference>
<sequence length="151" mass="18186">MNNDKLQRMVENLSEEKFGRTFRHCAYFNKRLRTTGGRYLLKSHDIEINPKQYEHYGEDAVVKIILHELCHYHLHIAGKGYQHKDQDFKRLSQQVGAPRFCNSIESYQQRANYEYYCTKCHAKYIRIRKVDTNRMRCGHCNGKLRMKRQLK</sequence>
<gene>
    <name type="ordered locus">SA1867</name>
</gene>